<dbReference type="EMBL" id="CP000089">
    <property type="protein sequence ID" value="AAZ45370.1"/>
    <property type="molecule type" value="Genomic_DNA"/>
</dbReference>
<dbReference type="SMR" id="Q47IG1"/>
<dbReference type="STRING" id="159087.Daro_0613"/>
<dbReference type="KEGG" id="dar:Daro_0613"/>
<dbReference type="eggNOG" id="COG1952">
    <property type="taxonomic scope" value="Bacteria"/>
</dbReference>
<dbReference type="HOGENOM" id="CLU_111574_1_0_4"/>
<dbReference type="OrthoDB" id="9795145at2"/>
<dbReference type="GO" id="GO:0005737">
    <property type="term" value="C:cytoplasm"/>
    <property type="evidence" value="ECO:0007669"/>
    <property type="project" value="UniProtKB-SubCell"/>
</dbReference>
<dbReference type="GO" id="GO:0051082">
    <property type="term" value="F:unfolded protein binding"/>
    <property type="evidence" value="ECO:0007669"/>
    <property type="project" value="InterPro"/>
</dbReference>
<dbReference type="GO" id="GO:0006457">
    <property type="term" value="P:protein folding"/>
    <property type="evidence" value="ECO:0007669"/>
    <property type="project" value="UniProtKB-UniRule"/>
</dbReference>
<dbReference type="GO" id="GO:0051262">
    <property type="term" value="P:protein tetramerization"/>
    <property type="evidence" value="ECO:0007669"/>
    <property type="project" value="InterPro"/>
</dbReference>
<dbReference type="GO" id="GO:0015031">
    <property type="term" value="P:protein transport"/>
    <property type="evidence" value="ECO:0007669"/>
    <property type="project" value="UniProtKB-UniRule"/>
</dbReference>
<dbReference type="Gene3D" id="3.10.420.10">
    <property type="entry name" value="SecB-like"/>
    <property type="match status" value="1"/>
</dbReference>
<dbReference type="HAMAP" id="MF_00821">
    <property type="entry name" value="SecB"/>
    <property type="match status" value="1"/>
</dbReference>
<dbReference type="InterPro" id="IPR003708">
    <property type="entry name" value="SecB"/>
</dbReference>
<dbReference type="InterPro" id="IPR035958">
    <property type="entry name" value="SecB-like_sf"/>
</dbReference>
<dbReference type="NCBIfam" id="NF004392">
    <property type="entry name" value="PRK05751.1-3"/>
    <property type="match status" value="1"/>
</dbReference>
<dbReference type="NCBIfam" id="NF004393">
    <property type="entry name" value="PRK05751.1-4"/>
    <property type="match status" value="1"/>
</dbReference>
<dbReference type="NCBIfam" id="NF004394">
    <property type="entry name" value="PRK05751.1-5"/>
    <property type="match status" value="1"/>
</dbReference>
<dbReference type="NCBIfam" id="TIGR00809">
    <property type="entry name" value="secB"/>
    <property type="match status" value="1"/>
</dbReference>
<dbReference type="PANTHER" id="PTHR36918">
    <property type="match status" value="1"/>
</dbReference>
<dbReference type="PANTHER" id="PTHR36918:SF1">
    <property type="entry name" value="PROTEIN-EXPORT PROTEIN SECB"/>
    <property type="match status" value="1"/>
</dbReference>
<dbReference type="Pfam" id="PF02556">
    <property type="entry name" value="SecB"/>
    <property type="match status" value="1"/>
</dbReference>
<dbReference type="PRINTS" id="PR01594">
    <property type="entry name" value="SECBCHAPRONE"/>
</dbReference>
<dbReference type="SUPFAM" id="SSF54611">
    <property type="entry name" value="SecB-like"/>
    <property type="match status" value="1"/>
</dbReference>
<comment type="function">
    <text evidence="1">One of the proteins required for the normal export of preproteins out of the cell cytoplasm. It is a molecular chaperone that binds to a subset of precursor proteins, maintaining them in a translocation-competent state. It also specifically binds to its receptor SecA.</text>
</comment>
<comment type="subunit">
    <text evidence="1">Homotetramer, a dimer of dimers. One homotetramer interacts with 1 SecA dimer.</text>
</comment>
<comment type="subcellular location">
    <subcellularLocation>
        <location evidence="1">Cytoplasm</location>
    </subcellularLocation>
</comment>
<comment type="similarity">
    <text evidence="1">Belongs to the SecB family.</text>
</comment>
<name>SECB_DECAR</name>
<accession>Q47IG1</accession>
<sequence length="152" mass="16795">MEQNEQPVFGIEKLYVKDLSVEVPNAPEIFLEREQPQVEIQLNTGGRAVGDGVYEVVLTVTVTAKMPEKTVFLVEVGQAGIFRIQNVPEEQLEPLIAVACPNILFPYAREAVSDAVSRAGFQPIVLQPVNFEGMYMQRLQEQAGAPAEVPIQ</sequence>
<protein>
    <recommendedName>
        <fullName evidence="1">Protein-export protein SecB</fullName>
    </recommendedName>
</protein>
<keyword id="KW-0143">Chaperone</keyword>
<keyword id="KW-0963">Cytoplasm</keyword>
<keyword id="KW-0653">Protein transport</keyword>
<keyword id="KW-0811">Translocation</keyword>
<keyword id="KW-0813">Transport</keyword>
<reference key="1">
    <citation type="journal article" date="2009" name="BMC Genomics">
        <title>Metabolic analysis of the soil microbe Dechloromonas aromatica str. RCB: indications of a surprisingly complex life-style and cryptic anaerobic pathways for aromatic degradation.</title>
        <authorList>
            <person name="Salinero K.K."/>
            <person name="Keller K."/>
            <person name="Feil W.S."/>
            <person name="Feil H."/>
            <person name="Trong S."/>
            <person name="Di Bartolo G."/>
            <person name="Lapidus A."/>
        </authorList>
    </citation>
    <scope>NUCLEOTIDE SEQUENCE [LARGE SCALE GENOMIC DNA]</scope>
    <source>
        <strain>RCB</strain>
    </source>
</reference>
<organism>
    <name type="scientific">Dechloromonas aromatica (strain RCB)</name>
    <dbReference type="NCBI Taxonomy" id="159087"/>
    <lineage>
        <taxon>Bacteria</taxon>
        <taxon>Pseudomonadati</taxon>
        <taxon>Pseudomonadota</taxon>
        <taxon>Betaproteobacteria</taxon>
        <taxon>Rhodocyclales</taxon>
        <taxon>Azonexaceae</taxon>
        <taxon>Dechloromonas</taxon>
    </lineage>
</organism>
<evidence type="ECO:0000255" key="1">
    <source>
        <dbReference type="HAMAP-Rule" id="MF_00821"/>
    </source>
</evidence>
<proteinExistence type="inferred from homology"/>
<gene>
    <name evidence="1" type="primary">secB</name>
    <name type="ordered locus">Daro_0613</name>
</gene>
<feature type="chain" id="PRO_0000055364" description="Protein-export protein SecB">
    <location>
        <begin position="1"/>
        <end position="152"/>
    </location>
</feature>